<reference key="1">
    <citation type="journal article" date="1997" name="Nature">
        <title>The complete genome sequence of the gastric pathogen Helicobacter pylori.</title>
        <authorList>
            <person name="Tomb J.-F."/>
            <person name="White O."/>
            <person name="Kerlavage A.R."/>
            <person name="Clayton R.A."/>
            <person name="Sutton G.G."/>
            <person name="Fleischmann R.D."/>
            <person name="Ketchum K.A."/>
            <person name="Klenk H.-P."/>
            <person name="Gill S.R."/>
            <person name="Dougherty B.A."/>
            <person name="Nelson K.E."/>
            <person name="Quackenbush J."/>
            <person name="Zhou L."/>
            <person name="Kirkness E.F."/>
            <person name="Peterson S.N."/>
            <person name="Loftus B.J."/>
            <person name="Richardson D.L."/>
            <person name="Dodson R.J."/>
            <person name="Khalak H.G."/>
            <person name="Glodek A."/>
            <person name="McKenney K."/>
            <person name="FitzGerald L.M."/>
            <person name="Lee N."/>
            <person name="Adams M.D."/>
            <person name="Hickey E.K."/>
            <person name="Berg D.E."/>
            <person name="Gocayne J.D."/>
            <person name="Utterback T.R."/>
            <person name="Peterson J.D."/>
            <person name="Kelley J.M."/>
            <person name="Cotton M.D."/>
            <person name="Weidman J.F."/>
            <person name="Fujii C."/>
            <person name="Bowman C."/>
            <person name="Watthey L."/>
            <person name="Wallin E."/>
            <person name="Hayes W.S."/>
            <person name="Borodovsky M."/>
            <person name="Karp P.D."/>
            <person name="Smith H.O."/>
            <person name="Fraser C.M."/>
            <person name="Venter J.C."/>
        </authorList>
    </citation>
    <scope>NUCLEOTIDE SEQUENCE [LARGE SCALE GENOMIC DNA]</scope>
    <source>
        <strain>ATCC 700392 / 26695</strain>
    </source>
</reference>
<reference key="2">
    <citation type="journal article" date="2003" name="Nucleic Acids Res.">
        <title>Functional characterization of Helicobacter pylori DnaB helicase.</title>
        <authorList>
            <person name="Soni R.K."/>
            <person name="Mehra P."/>
            <person name="Choudhury N.R."/>
            <person name="Mukhopadhyay G."/>
            <person name="Dhar S.K."/>
        </authorList>
    </citation>
    <scope>FUNCTION AS A 5'-3' DNA HELICASE</scope>
    <scope>FUNCTION AS AN ATPASE</scope>
    <scope>CATALYTIC ACTIVITY</scope>
    <scope>COFACTOR</scope>
    <scope>SUBUNIT</scope>
    <scope>ATP-BINDING</scope>
    <scope>MUTAGENESIS OF ARG-204</scope>
    <source>
        <strain>ATCC 700392 / 26695</strain>
    </source>
</reference>
<reference key="3">
    <citation type="journal article" date="2013" name="J. Bacteriol.">
        <title>Crystal structure and mode of helicase binding of the C-terminal domain of primase from Helicobacter pylori.</title>
        <authorList>
            <person name="Abdul Rehman S.A."/>
            <person name="Verma V."/>
            <person name="Mazumder M."/>
            <person name="Dhar S.K."/>
            <person name="Gourinath S."/>
        </authorList>
    </citation>
    <scope>FUNCTION</scope>
    <scope>CATALYTIC ACTIVITY</scope>
    <scope>ACTIVITY REGULATION</scope>
    <scope>BIOPHYSICOCHEMICAL PROPERTIES</scope>
    <scope>INTERACTION WITH DNAG</scope>
</reference>
<reference evidence="8" key="4">
    <citation type="journal article" date="2012" name="Structure">
        <title>Architecture of a dodecameric bacterial replicative helicase.</title>
        <authorList>
            <person name="Stelter M."/>
            <person name="Gutsche I."/>
            <person name="Kapp U."/>
            <person name="Bazin A."/>
            <person name="Bajic G."/>
            <person name="Goret G."/>
            <person name="Jamin M."/>
            <person name="Timmins J."/>
            <person name="Terradot L."/>
        </authorList>
    </citation>
    <scope>X-RAY CRYSTALLOGRAPHY (2.50 ANGSTROMS) OF 152-473</scope>
    <scope>FUNCTION</scope>
    <scope>SUBUNIT</scope>
    <scope>DOMAIN</scope>
</reference>
<reference evidence="9" key="5">
    <citation type="journal article" date="2015" name="Nucleic Acids Res.">
        <title>Structure and primase-mediated activation of a bacterial dodecameric replicative helicase.</title>
        <authorList>
            <person name="Bazin A."/>
            <person name="Cherrier M.V."/>
            <person name="Gutsche I."/>
            <person name="Timmins J."/>
            <person name="Terradot L."/>
        </authorList>
    </citation>
    <scope>X-RAY CRYSTALLOGRAPHY (6.70 ANGSTROMS)</scope>
    <scope>FUNCTION</scope>
    <scope>CATALYTIC ACTIVITY</scope>
    <scope>SSDNA-BINDING</scope>
    <scope>ACTIVITY REGULATION</scope>
    <scope>SUBUNIT</scope>
    <scope>INTERACTION WITH DNAG</scope>
    <scope>DOMAIN</scope>
    <scope>MUTAGENESIS OF 1-MET--GLN-9; LEU-4; GLN-8 AND GLU-80</scope>
</reference>
<dbReference type="EC" id="5.6.2.3" evidence="2 5"/>
<dbReference type="EMBL" id="AE000511">
    <property type="protein sequence ID" value="AAD08402.1"/>
    <property type="molecule type" value="Genomic_DNA"/>
</dbReference>
<dbReference type="PIR" id="B64690">
    <property type="entry name" value="B64690"/>
</dbReference>
<dbReference type="RefSeq" id="NP_208154.1">
    <property type="nucleotide sequence ID" value="NC_000915.1"/>
</dbReference>
<dbReference type="RefSeq" id="WP_000349722.1">
    <property type="nucleotide sequence ID" value="NC_018939.1"/>
</dbReference>
<dbReference type="PDB" id="3GXV">
    <property type="method" value="X-ray"/>
    <property type="resolution" value="2.20 A"/>
    <property type="chains" value="A/B=1-121, C=101-122, D=98-123"/>
</dbReference>
<dbReference type="PDB" id="4A1F">
    <property type="method" value="X-ray"/>
    <property type="resolution" value="2.50 A"/>
    <property type="chains" value="A/B=152-473"/>
</dbReference>
<dbReference type="PDB" id="4ZC0">
    <property type="method" value="X-ray"/>
    <property type="resolution" value="6.70 A"/>
    <property type="chains" value="A/B/C/D=1-488"/>
</dbReference>
<dbReference type="PDBsum" id="3GXV"/>
<dbReference type="PDBsum" id="4A1F"/>
<dbReference type="PDBsum" id="4ZC0"/>
<dbReference type="SMR" id="O25916"/>
<dbReference type="DIP" id="DIP-3388N"/>
<dbReference type="FunCoup" id="O25916">
    <property type="interactions" value="166"/>
</dbReference>
<dbReference type="IntAct" id="O25916">
    <property type="interactions" value="4"/>
</dbReference>
<dbReference type="MINT" id="O25916"/>
<dbReference type="STRING" id="85962.HP_1362"/>
<dbReference type="PaxDb" id="85962-C694_07030"/>
<dbReference type="EnsemblBacteria" id="AAD08402">
    <property type="protein sequence ID" value="AAD08402"/>
    <property type="gene ID" value="HP_1362"/>
</dbReference>
<dbReference type="KEGG" id="heo:C694_07030"/>
<dbReference type="KEGG" id="hpy:HP_1362"/>
<dbReference type="PATRIC" id="fig|85962.47.peg.1459"/>
<dbReference type="eggNOG" id="COG0305">
    <property type="taxonomic scope" value="Bacteria"/>
</dbReference>
<dbReference type="InParanoid" id="O25916"/>
<dbReference type="OrthoDB" id="9773982at2"/>
<dbReference type="PhylomeDB" id="O25916"/>
<dbReference type="EvolutionaryTrace" id="O25916"/>
<dbReference type="Proteomes" id="UP000000429">
    <property type="component" value="Chromosome"/>
</dbReference>
<dbReference type="GO" id="GO:0005829">
    <property type="term" value="C:cytosol"/>
    <property type="evidence" value="ECO:0000318"/>
    <property type="project" value="GO_Central"/>
</dbReference>
<dbReference type="GO" id="GO:1990077">
    <property type="term" value="C:primosome complex"/>
    <property type="evidence" value="ECO:0007669"/>
    <property type="project" value="UniProtKB-KW"/>
</dbReference>
<dbReference type="GO" id="GO:0043139">
    <property type="term" value="F:5'-3' DNA helicase activity"/>
    <property type="evidence" value="ECO:0000314"/>
    <property type="project" value="UniProtKB"/>
</dbReference>
<dbReference type="GO" id="GO:0005524">
    <property type="term" value="F:ATP binding"/>
    <property type="evidence" value="ECO:0007669"/>
    <property type="project" value="UniProtKB-KW"/>
</dbReference>
<dbReference type="GO" id="GO:0016887">
    <property type="term" value="F:ATP hydrolysis activity"/>
    <property type="evidence" value="ECO:0000314"/>
    <property type="project" value="UniProtKB"/>
</dbReference>
<dbReference type="GO" id="GO:0003677">
    <property type="term" value="F:DNA binding"/>
    <property type="evidence" value="ECO:0007669"/>
    <property type="project" value="UniProtKB-KW"/>
</dbReference>
<dbReference type="GO" id="GO:0003678">
    <property type="term" value="F:DNA helicase activity"/>
    <property type="evidence" value="ECO:0000318"/>
    <property type="project" value="GO_Central"/>
</dbReference>
<dbReference type="GO" id="GO:0042802">
    <property type="term" value="F:identical protein binding"/>
    <property type="evidence" value="ECO:0000353"/>
    <property type="project" value="IntAct"/>
</dbReference>
<dbReference type="GO" id="GO:0006260">
    <property type="term" value="P:DNA replication"/>
    <property type="evidence" value="ECO:0000318"/>
    <property type="project" value="GO_Central"/>
</dbReference>
<dbReference type="GO" id="GO:0006269">
    <property type="term" value="P:DNA replication, synthesis of primer"/>
    <property type="evidence" value="ECO:0007669"/>
    <property type="project" value="UniProtKB-KW"/>
</dbReference>
<dbReference type="CDD" id="cd00984">
    <property type="entry name" value="DnaB_C"/>
    <property type="match status" value="1"/>
</dbReference>
<dbReference type="Gene3D" id="1.10.860.10">
    <property type="entry name" value="DNAb Helicase, Chain A"/>
    <property type="match status" value="1"/>
</dbReference>
<dbReference type="Gene3D" id="3.40.50.300">
    <property type="entry name" value="P-loop containing nucleotide triphosphate hydrolases"/>
    <property type="match status" value="1"/>
</dbReference>
<dbReference type="InterPro" id="IPR036185">
    <property type="entry name" value="DNA_heli_DnaB-like_N_sf"/>
</dbReference>
<dbReference type="InterPro" id="IPR007692">
    <property type="entry name" value="DNA_helicase_DnaB"/>
</dbReference>
<dbReference type="InterPro" id="IPR007694">
    <property type="entry name" value="DNA_helicase_DnaB-like_C"/>
</dbReference>
<dbReference type="InterPro" id="IPR007693">
    <property type="entry name" value="DNA_helicase_DnaB-like_N"/>
</dbReference>
<dbReference type="InterPro" id="IPR016136">
    <property type="entry name" value="DNA_helicase_N/primase_C"/>
</dbReference>
<dbReference type="InterPro" id="IPR027417">
    <property type="entry name" value="P-loop_NTPase"/>
</dbReference>
<dbReference type="NCBIfam" id="TIGR00665">
    <property type="entry name" value="DnaB"/>
    <property type="match status" value="1"/>
</dbReference>
<dbReference type="NCBIfam" id="NF006306">
    <property type="entry name" value="PRK08506.1"/>
    <property type="match status" value="1"/>
</dbReference>
<dbReference type="PANTHER" id="PTHR30153:SF2">
    <property type="entry name" value="REPLICATIVE DNA HELICASE"/>
    <property type="match status" value="1"/>
</dbReference>
<dbReference type="PANTHER" id="PTHR30153">
    <property type="entry name" value="REPLICATIVE DNA HELICASE DNAB"/>
    <property type="match status" value="1"/>
</dbReference>
<dbReference type="Pfam" id="PF00772">
    <property type="entry name" value="DnaB"/>
    <property type="match status" value="1"/>
</dbReference>
<dbReference type="Pfam" id="PF03796">
    <property type="entry name" value="DnaB_C"/>
    <property type="match status" value="1"/>
</dbReference>
<dbReference type="SUPFAM" id="SSF48024">
    <property type="entry name" value="N-terminal domain of DnaB helicase"/>
    <property type="match status" value="1"/>
</dbReference>
<dbReference type="SUPFAM" id="SSF52540">
    <property type="entry name" value="P-loop containing nucleoside triphosphate hydrolases"/>
    <property type="match status" value="1"/>
</dbReference>
<dbReference type="PROSITE" id="PS51199">
    <property type="entry name" value="SF4_HELICASE"/>
    <property type="match status" value="1"/>
</dbReference>
<feature type="chain" id="PRO_0000102023" description="Replicative DNA helicase DnaB">
    <location>
        <begin position="1"/>
        <end position="488"/>
    </location>
</feature>
<feature type="domain" description="SF4 helicase" evidence="1">
    <location>
        <begin position="172"/>
        <end position="471"/>
    </location>
</feature>
<feature type="region of interest" description="N-terminal domain" evidence="3 5">
    <location>
        <begin position="1"/>
        <end position="145"/>
    </location>
</feature>
<feature type="region of interest" description="Head domain" evidence="7">
    <location>
        <begin position="1"/>
        <end position="93"/>
    </location>
</feature>
<feature type="region of interest" description="Hairpin domain" evidence="7">
    <location>
        <begin position="94"/>
        <end position="144"/>
    </location>
</feature>
<feature type="region of interest" description="Linker" evidence="7">
    <location>
        <begin position="145"/>
        <end position="175"/>
    </location>
</feature>
<feature type="region of interest" description="ATPase domain" evidence="7">
    <location>
        <begin position="176"/>
        <end position="488"/>
    </location>
</feature>
<feature type="region of interest" description="HPI" evidence="3">
    <location>
        <begin position="390"/>
        <end position="433"/>
    </location>
</feature>
<feature type="binding site" evidence="1">
    <location>
        <begin position="203"/>
        <end position="210"/>
    </location>
    <ligand>
        <name>ATP</name>
        <dbReference type="ChEBI" id="CHEBI:30616"/>
    </ligand>
</feature>
<feature type="mutagenesis site" description="No longer forms dodecamers." evidence="5">
    <location>
        <begin position="1"/>
        <end position="9"/>
    </location>
</feature>
<feature type="mutagenesis site" description="Still forms dodecamers." evidence="5">
    <original>L</original>
    <variation>A</variation>
    <location>
        <position position="4"/>
    </location>
</feature>
<feature type="mutagenesis site" description="Forms predominantly hexamers." evidence="5">
    <original>Q</original>
    <variation>A</variation>
    <location>
        <position position="8"/>
    </location>
</feature>
<feature type="mutagenesis site" description="Forms predominantly hexamers." evidence="5">
    <original>E</original>
    <variation>A</variation>
    <location>
        <position position="80"/>
    </location>
</feature>
<feature type="mutagenesis site" description="Loss of DNA helicase and ATPase activities, no longer binds ATP." evidence="2">
    <original>R</original>
    <variation>C</variation>
    <location>
        <position position="204"/>
    </location>
</feature>
<feature type="helix" evidence="10">
    <location>
        <begin position="3"/>
        <end position="23"/>
    </location>
</feature>
<feature type="helix" evidence="10">
    <location>
        <begin position="25"/>
        <end position="27"/>
    </location>
</feature>
<feature type="helix" evidence="10">
    <location>
        <begin position="28"/>
        <end position="32"/>
    </location>
</feature>
<feature type="helix" evidence="10">
    <location>
        <begin position="37"/>
        <end position="39"/>
    </location>
</feature>
<feature type="helix" evidence="10">
    <location>
        <begin position="43"/>
        <end position="57"/>
    </location>
</feature>
<feature type="helix" evidence="10">
    <location>
        <begin position="64"/>
        <end position="69"/>
    </location>
</feature>
<feature type="strand" evidence="10">
    <location>
        <begin position="73"/>
        <end position="75"/>
    </location>
</feature>
<feature type="helix" evidence="10">
    <location>
        <begin position="79"/>
        <end position="86"/>
    </location>
</feature>
<feature type="helix" evidence="10">
    <location>
        <begin position="95"/>
        <end position="120"/>
    </location>
</feature>
<feature type="helix" evidence="11">
    <location>
        <begin position="154"/>
        <end position="171"/>
    </location>
</feature>
<feature type="turn" evidence="11">
    <location>
        <begin position="172"/>
        <end position="174"/>
    </location>
</feature>
<feature type="helix" evidence="11">
    <location>
        <begin position="184"/>
        <end position="190"/>
    </location>
</feature>
<feature type="strand" evidence="11">
    <location>
        <begin position="198"/>
        <end position="203"/>
    </location>
</feature>
<feature type="helix" evidence="11">
    <location>
        <begin position="209"/>
        <end position="222"/>
    </location>
</feature>
<feature type="strand" evidence="11">
    <location>
        <begin position="226"/>
        <end position="234"/>
    </location>
</feature>
<feature type="helix" evidence="11">
    <location>
        <begin position="236"/>
        <end position="248"/>
    </location>
</feature>
<feature type="helix" evidence="11">
    <location>
        <begin position="252"/>
        <end position="257"/>
    </location>
</feature>
<feature type="helix" evidence="11">
    <location>
        <begin position="262"/>
        <end position="277"/>
    </location>
</feature>
<feature type="strand" evidence="11">
    <location>
        <begin position="280"/>
        <end position="283"/>
    </location>
</feature>
<feature type="helix" evidence="11">
    <location>
        <begin position="290"/>
        <end position="303"/>
    </location>
</feature>
<feature type="strand" evidence="11">
    <location>
        <begin position="307"/>
        <end position="316"/>
    </location>
</feature>
<feature type="helix" evidence="11">
    <location>
        <begin position="321"/>
        <end position="326"/>
    </location>
</feature>
<feature type="helix" evidence="11">
    <location>
        <begin position="331"/>
        <end position="345"/>
    </location>
</feature>
<feature type="strand" evidence="11">
    <location>
        <begin position="349"/>
        <end position="354"/>
    </location>
</feature>
<feature type="helix" evidence="11">
    <location>
        <begin position="357"/>
        <end position="361"/>
    </location>
</feature>
<feature type="strand" evidence="11">
    <location>
        <begin position="362"/>
        <end position="364"/>
    </location>
</feature>
<feature type="helix" evidence="11">
    <location>
        <begin position="369"/>
        <end position="371"/>
    </location>
</feature>
<feature type="strand" evidence="11">
    <location>
        <begin position="372"/>
        <end position="374"/>
    </location>
</feature>
<feature type="strand" evidence="11">
    <location>
        <begin position="383"/>
        <end position="389"/>
    </location>
</feature>
<feature type="helix" evidence="11">
    <location>
        <begin position="391"/>
        <end position="407"/>
    </location>
</feature>
<feature type="helix" evidence="11">
    <location>
        <begin position="408"/>
        <end position="410"/>
    </location>
</feature>
<feature type="helix" evidence="11">
    <location>
        <begin position="412"/>
        <end position="431"/>
    </location>
</feature>
<feature type="strand" evidence="11">
    <location>
        <begin position="434"/>
        <end position="445"/>
    </location>
</feature>
<feature type="strand" evidence="11">
    <location>
        <begin position="451"/>
        <end position="458"/>
    </location>
</feature>
<feature type="helix" evidence="11">
    <location>
        <begin position="459"/>
        <end position="461"/>
    </location>
</feature>
<feature type="turn" evidence="11">
    <location>
        <begin position="469"/>
        <end position="471"/>
    </location>
</feature>
<name>DNAB_HELPY</name>
<comment type="function">
    <text evidence="2 3 4 5">The main replicative DNA helicase, it participates in initiation and elongation during chromosome replication. Travels ahead of the DNA replisome, separating dsDNA into templates for DNA synthesis. An ATP-dependent 5'-3' DNA helicase that prefers 5'-tailed substrates (have a 5' single-stranded (ss)DNA tail) (PubMed:14627816, PubMed:23585534). ATP, GTP and UTP are equally active for helicase activity in vitro, while dATP and CTP are less active (PubMed:14627816). Its DNA-dependent ATPase activity is stimulated by ssDNA (PubMed:14627816, PubMed:22405014, PubMed:26264665). Binds ss- but not double-stranded (ds)DNA (PubMed:26264665). Rescues a temperature-sensitive E.coli dnaB mutation in vivo (PubMed:14627816).</text>
</comment>
<comment type="catalytic activity">
    <reaction evidence="2 4 5">
        <text>Couples ATP hydrolysis with the unwinding of duplex DNA at the replication fork by translocating in the 5'-3' direction. This creates two antiparallel DNA single strands (ssDNA). The leading ssDNA polymer is the template for DNA polymerase III holoenzyme which synthesizes a continuous strand.</text>
        <dbReference type="EC" id="5.6.2.3"/>
    </reaction>
</comment>
<comment type="catalytic activity">
    <reaction evidence="2 3 4">
        <text>ATP + H2O = ADP + phosphate + H(+)</text>
        <dbReference type="Rhea" id="RHEA:13065"/>
        <dbReference type="ChEBI" id="CHEBI:15377"/>
        <dbReference type="ChEBI" id="CHEBI:15378"/>
        <dbReference type="ChEBI" id="CHEBI:30616"/>
        <dbReference type="ChEBI" id="CHEBI:43474"/>
        <dbReference type="ChEBI" id="CHEBI:456216"/>
        <dbReference type="EC" id="5.6.2.3"/>
    </reaction>
</comment>
<comment type="cofactor">
    <cofactor evidence="2">
        <name>Mg(2+)</name>
        <dbReference type="ChEBI" id="CHEBI:18420"/>
    </cofactor>
    <text evidence="2">Mg(2+) is the preferred divalent cation for helicase activity; Mn(2+), Ca(2+) and Co(2+) will substitute but show less activity (PubMed:14627816).</text>
</comment>
<comment type="activity regulation">
    <text evidence="4 5">A C-terminal fragment of DnaG primase stimulates the helicase and ATPase activities and increases ssDNA binding (PubMed:23585534, PubMed:26264665).</text>
</comment>
<comment type="biophysicochemical properties">
    <kinetics>
        <KM evidence="4">100 uM for ATP</KM>
    </kinetics>
</comment>
<comment type="subunit">
    <text evidence="2 3 5">Homohexamer (PubMed:14627816). Dodecamer formed by 2 stacked hexameric rings (PubMed:22405014, PubMed:26264665). Binds ssDNA as a dodecamer in the presence of ATP, in the presence of non-hyrolyzable AMPPMP binds ssDNA as a hexamer (PubMed:26264665). Binds DnaG primase; when the C-terminus of DnaG (residues 415-559) binds the dodecamer dissociates into a hexamer, which can bind up to 3 DnaG fragments (PubMed:26264665).</text>
</comment>
<comment type="interaction">
    <interactant intactId="EBI-7529552">
        <id>O25916</id>
    </interactant>
    <interactant intactId="EBI-7529552">
        <id>O25916</id>
        <label>dnaB</label>
    </interactant>
    <organismsDiffer>false</organismsDiffer>
    <experiments>6</experiments>
</comment>
<comment type="domain">
    <text evidence="3 5">Within each hexamer the N-terminal domains (NTD) form a ring, as do the ATPase domains; the 2 rings stack (PubMed:22405014, PubMed:26264665). The HPI (Helicobacter pylori insertion) forms a helix-turn-helix that protrudes from the ATPase domain; one side is positively charged while the other is negatively charged (PubMed:22405014, PubMed:26264665). The HPI inserts form a collar on the exterior of the ATPase domains (PubMed:26264665). In the dodecamer (which has 4 layers) the homohexameric rings stack via their NTD rings (PubMed:26264665).</text>
</comment>
<comment type="similarity">
    <text evidence="6">Belongs to the helicase family. DnaB subfamily.</text>
</comment>
<gene>
    <name type="primary">dnaB</name>
    <name type="ordered locus">HP_1362</name>
</gene>
<evidence type="ECO:0000255" key="1">
    <source>
        <dbReference type="PROSITE-ProRule" id="PRU00596"/>
    </source>
</evidence>
<evidence type="ECO:0000269" key="2">
    <source>
    </source>
</evidence>
<evidence type="ECO:0000269" key="3">
    <source>
    </source>
</evidence>
<evidence type="ECO:0000269" key="4">
    <source>
    </source>
</evidence>
<evidence type="ECO:0000269" key="5">
    <source>
    </source>
</evidence>
<evidence type="ECO:0000305" key="6"/>
<evidence type="ECO:0000305" key="7">
    <source>
    </source>
</evidence>
<evidence type="ECO:0007744" key="8">
    <source>
        <dbReference type="PDB" id="4A1F"/>
    </source>
</evidence>
<evidence type="ECO:0007744" key="9">
    <source>
        <dbReference type="PDB" id="4ZC0"/>
    </source>
</evidence>
<evidence type="ECO:0007829" key="10">
    <source>
        <dbReference type="PDB" id="3GXV"/>
    </source>
</evidence>
<evidence type="ECO:0007829" key="11">
    <source>
        <dbReference type="PDB" id="4A1F"/>
    </source>
</evidence>
<keyword id="KW-0002">3D-structure</keyword>
<keyword id="KW-0067">ATP-binding</keyword>
<keyword id="KW-0235">DNA replication</keyword>
<keyword id="KW-0238">DNA-binding</keyword>
<keyword id="KW-0347">Helicase</keyword>
<keyword id="KW-0378">Hydrolase</keyword>
<keyword id="KW-0413">Isomerase</keyword>
<keyword id="KW-0460">Magnesium</keyword>
<keyword id="KW-0547">Nucleotide-binding</keyword>
<keyword id="KW-0639">Primosome</keyword>
<keyword id="KW-1185">Reference proteome</keyword>
<sequence length="488" mass="55726">MDHLKHLQQLQNIERIVLSGIVLANHKIEEVHSVLEPSDFYYPPNGLFFEIALKLHEEDCPIDENFIRQKMPKDKQIKEEDLVAIFAASPIDNIEAYVEEIKNASIKRKLFGLANTIREQALESAQKSSDILGAVEREVYALLNGSTIEGFRNIKEVLESAMDLITENQRKGSLEVTGIPTGFVQLDNYTSGFNKGSLVIIGARPSMGKTSLMMNMVLSALNDDRGVAVFSLEMSAEQLALRALSDLTSINMHDLESGRLDDDQWENLAKCFDHLSQKKLFFYDKSYVRIEQIRLQLRKLKSQHKELGIAFIDYLQLMSGSKATKERHEQIAEISRELKTLARELEIPIIALVQLNRSLENRDDKRPILSDIKDSGGIEQDADIVLFLYRGYIYQMRAEDNKIDKLKKEGKIEEAQELYLKVNEERRIHKQNGSIEEAEIIVAKNRNGATGTVYTRFNAPFTRYEDMPIDSHLEEGQETKVDYDIVTT</sequence>
<protein>
    <recommendedName>
        <fullName>Replicative DNA helicase DnaB</fullName>
        <ecNumber evidence="2 5">5.6.2.3</ecNumber>
    </recommendedName>
    <alternativeName>
        <fullName evidence="6">DNA 5'-3' helicase DnaB</fullName>
    </alternativeName>
</protein>
<organism>
    <name type="scientific">Helicobacter pylori (strain ATCC 700392 / 26695)</name>
    <name type="common">Campylobacter pylori</name>
    <dbReference type="NCBI Taxonomy" id="85962"/>
    <lineage>
        <taxon>Bacteria</taxon>
        <taxon>Pseudomonadati</taxon>
        <taxon>Campylobacterota</taxon>
        <taxon>Epsilonproteobacteria</taxon>
        <taxon>Campylobacterales</taxon>
        <taxon>Helicobacteraceae</taxon>
        <taxon>Helicobacter</taxon>
    </lineage>
</organism>
<proteinExistence type="evidence at protein level"/>
<accession>O25916</accession>